<evidence type="ECO:0000255" key="1">
    <source>
        <dbReference type="HAMAP-Rule" id="MF_01343"/>
    </source>
</evidence>
<evidence type="ECO:0000305" key="2"/>
<proteinExistence type="inferred from homology"/>
<feature type="chain" id="PRO_1000143121" description="Small ribosomal subunit protein uS15">
    <location>
        <begin position="1"/>
        <end position="88"/>
    </location>
</feature>
<sequence>MLVTEKKQEIVNAHKLHDSDTGSPEVQIALLSERITYLTEHFKTHKKDHHSRRGLLKIVGQRRGLLDYLKKKDVERYKSIIAKLGIRR</sequence>
<accession>B5EI62</accession>
<protein>
    <recommendedName>
        <fullName evidence="1">Small ribosomal subunit protein uS15</fullName>
    </recommendedName>
    <alternativeName>
        <fullName evidence="2">30S ribosomal protein S15</fullName>
    </alternativeName>
</protein>
<gene>
    <name evidence="1" type="primary">rpsO</name>
    <name type="ordered locus">Gbem_1307</name>
</gene>
<keyword id="KW-1185">Reference proteome</keyword>
<keyword id="KW-0687">Ribonucleoprotein</keyword>
<keyword id="KW-0689">Ribosomal protein</keyword>
<keyword id="KW-0694">RNA-binding</keyword>
<keyword id="KW-0699">rRNA-binding</keyword>
<name>RS15_CITBB</name>
<comment type="function">
    <text evidence="1">One of the primary rRNA binding proteins, it binds directly to 16S rRNA where it helps nucleate assembly of the platform of the 30S subunit by binding and bridging several RNA helices of the 16S rRNA.</text>
</comment>
<comment type="function">
    <text evidence="1">Forms an intersubunit bridge (bridge B4) with the 23S rRNA of the 50S subunit in the ribosome.</text>
</comment>
<comment type="subunit">
    <text evidence="1">Part of the 30S ribosomal subunit. Forms a bridge to the 50S subunit in the 70S ribosome, contacting the 23S rRNA.</text>
</comment>
<comment type="similarity">
    <text evidence="1">Belongs to the universal ribosomal protein uS15 family.</text>
</comment>
<organism>
    <name type="scientific">Citrifermentans bemidjiense (strain ATCC BAA-1014 / DSM 16622 / JCM 12645 / Bem)</name>
    <name type="common">Geobacter bemidjiensis</name>
    <dbReference type="NCBI Taxonomy" id="404380"/>
    <lineage>
        <taxon>Bacteria</taxon>
        <taxon>Pseudomonadati</taxon>
        <taxon>Thermodesulfobacteriota</taxon>
        <taxon>Desulfuromonadia</taxon>
        <taxon>Geobacterales</taxon>
        <taxon>Geobacteraceae</taxon>
        <taxon>Citrifermentans</taxon>
    </lineage>
</organism>
<reference key="1">
    <citation type="submission" date="2008-07" db="EMBL/GenBank/DDBJ databases">
        <title>Complete sequence of Geobacter bemidjiensis BEM.</title>
        <authorList>
            <consortium name="US DOE Joint Genome Institute"/>
            <person name="Lucas S."/>
            <person name="Copeland A."/>
            <person name="Lapidus A."/>
            <person name="Glavina del Rio T."/>
            <person name="Dalin E."/>
            <person name="Tice H."/>
            <person name="Bruce D."/>
            <person name="Goodwin L."/>
            <person name="Pitluck S."/>
            <person name="Kiss H."/>
            <person name="Brettin T."/>
            <person name="Detter J.C."/>
            <person name="Han C."/>
            <person name="Kuske C.R."/>
            <person name="Schmutz J."/>
            <person name="Larimer F."/>
            <person name="Land M."/>
            <person name="Hauser L."/>
            <person name="Kyrpides N."/>
            <person name="Lykidis A."/>
            <person name="Lovley D."/>
            <person name="Richardson P."/>
        </authorList>
    </citation>
    <scope>NUCLEOTIDE SEQUENCE [LARGE SCALE GENOMIC DNA]</scope>
    <source>
        <strain>ATCC BAA-1014 / DSM 16622 / JCM 12645 / Bem</strain>
    </source>
</reference>
<dbReference type="EMBL" id="CP001124">
    <property type="protein sequence ID" value="ACH38326.1"/>
    <property type="molecule type" value="Genomic_DNA"/>
</dbReference>
<dbReference type="RefSeq" id="WP_012529737.1">
    <property type="nucleotide sequence ID" value="NC_011146.1"/>
</dbReference>
<dbReference type="SMR" id="B5EI62"/>
<dbReference type="STRING" id="404380.Gbem_1307"/>
<dbReference type="KEGG" id="gbm:Gbem_1307"/>
<dbReference type="eggNOG" id="COG0184">
    <property type="taxonomic scope" value="Bacteria"/>
</dbReference>
<dbReference type="HOGENOM" id="CLU_148518_0_0_7"/>
<dbReference type="OrthoDB" id="9799262at2"/>
<dbReference type="Proteomes" id="UP000008825">
    <property type="component" value="Chromosome"/>
</dbReference>
<dbReference type="GO" id="GO:0022627">
    <property type="term" value="C:cytosolic small ribosomal subunit"/>
    <property type="evidence" value="ECO:0007669"/>
    <property type="project" value="TreeGrafter"/>
</dbReference>
<dbReference type="GO" id="GO:0019843">
    <property type="term" value="F:rRNA binding"/>
    <property type="evidence" value="ECO:0007669"/>
    <property type="project" value="UniProtKB-UniRule"/>
</dbReference>
<dbReference type="GO" id="GO:0003735">
    <property type="term" value="F:structural constituent of ribosome"/>
    <property type="evidence" value="ECO:0007669"/>
    <property type="project" value="InterPro"/>
</dbReference>
<dbReference type="GO" id="GO:0006412">
    <property type="term" value="P:translation"/>
    <property type="evidence" value="ECO:0007669"/>
    <property type="project" value="UniProtKB-UniRule"/>
</dbReference>
<dbReference type="CDD" id="cd00353">
    <property type="entry name" value="Ribosomal_S15p_S13e"/>
    <property type="match status" value="1"/>
</dbReference>
<dbReference type="FunFam" id="1.10.287.10:FF:000002">
    <property type="entry name" value="30S ribosomal protein S15"/>
    <property type="match status" value="1"/>
</dbReference>
<dbReference type="Gene3D" id="6.10.250.3130">
    <property type="match status" value="1"/>
</dbReference>
<dbReference type="Gene3D" id="1.10.287.10">
    <property type="entry name" value="S15/NS1, RNA-binding"/>
    <property type="match status" value="1"/>
</dbReference>
<dbReference type="HAMAP" id="MF_01343_B">
    <property type="entry name" value="Ribosomal_uS15_B"/>
    <property type="match status" value="1"/>
</dbReference>
<dbReference type="InterPro" id="IPR000589">
    <property type="entry name" value="Ribosomal_uS15"/>
</dbReference>
<dbReference type="InterPro" id="IPR005290">
    <property type="entry name" value="Ribosomal_uS15_bac-type"/>
</dbReference>
<dbReference type="InterPro" id="IPR009068">
    <property type="entry name" value="uS15_NS1_RNA-bd_sf"/>
</dbReference>
<dbReference type="NCBIfam" id="TIGR00952">
    <property type="entry name" value="S15_bact"/>
    <property type="match status" value="1"/>
</dbReference>
<dbReference type="PANTHER" id="PTHR23321">
    <property type="entry name" value="RIBOSOMAL PROTEIN S15, BACTERIAL AND ORGANELLAR"/>
    <property type="match status" value="1"/>
</dbReference>
<dbReference type="PANTHER" id="PTHR23321:SF26">
    <property type="entry name" value="SMALL RIBOSOMAL SUBUNIT PROTEIN US15M"/>
    <property type="match status" value="1"/>
</dbReference>
<dbReference type="Pfam" id="PF00312">
    <property type="entry name" value="Ribosomal_S15"/>
    <property type="match status" value="1"/>
</dbReference>
<dbReference type="SMART" id="SM01387">
    <property type="entry name" value="Ribosomal_S15"/>
    <property type="match status" value="1"/>
</dbReference>
<dbReference type="SUPFAM" id="SSF47060">
    <property type="entry name" value="S15/NS1 RNA-binding domain"/>
    <property type="match status" value="1"/>
</dbReference>
<dbReference type="PROSITE" id="PS00362">
    <property type="entry name" value="RIBOSOMAL_S15"/>
    <property type="match status" value="1"/>
</dbReference>